<feature type="chain" id="PRO_0000378473" description="PPE family protein PPE2">
    <location>
        <begin position="1"/>
        <end position="556"/>
    </location>
</feature>
<feature type="region of interest" description="PPE" evidence="8">
    <location>
        <begin position="8"/>
        <end position="164"/>
    </location>
</feature>
<feature type="region of interest" description="SH3-like" evidence="11">
    <location>
        <begin position="201"/>
        <end position="256"/>
    </location>
</feature>
<feature type="region of interest" description="Leucine zipper motif" evidence="10">
    <location>
        <begin position="319"/>
        <end position="340"/>
    </location>
</feature>
<feature type="region of interest" description="Disordered" evidence="1">
    <location>
        <begin position="385"/>
        <end position="418"/>
    </location>
</feature>
<feature type="region of interest" description="Disordered" evidence="1">
    <location>
        <begin position="443"/>
        <end position="556"/>
    </location>
</feature>
<feature type="short sequence motif" description="Nuclear localization signal" evidence="10 11">
    <location>
        <begin position="473"/>
        <end position="481"/>
    </location>
</feature>
<feature type="compositionally biased region" description="Pro residues" evidence="1">
    <location>
        <begin position="400"/>
        <end position="417"/>
    </location>
</feature>
<feature type="compositionally biased region" description="Low complexity" evidence="1">
    <location>
        <begin position="456"/>
        <end position="471"/>
    </location>
</feature>
<feature type="compositionally biased region" description="Basic residues" evidence="1">
    <location>
        <begin position="472"/>
        <end position="481"/>
    </location>
</feature>
<feature type="mutagenesis site" description="Does not affect interaction with NCF2 and ROS production." evidence="7">
    <original>Y</original>
    <variation>A</variation>
    <location>
        <position position="209"/>
    </location>
</feature>
<feature type="mutagenesis site" description="Does not interact with NCF2 and cannot inhibit ROS production." evidence="7">
    <original>W</original>
    <variation>A</variation>
    <location>
        <position position="236"/>
    </location>
</feature>
<feature type="mutagenesis site" description="Does not affect interaction with NCF2 and ROS production." evidence="7">
    <original>P</original>
    <variation>A</variation>
    <location>
        <position position="249"/>
    </location>
</feature>
<evidence type="ECO:0000256" key="1">
    <source>
        <dbReference type="SAM" id="MobiDB-lite"/>
    </source>
</evidence>
<evidence type="ECO:0000269" key="2">
    <source>
    </source>
</evidence>
<evidence type="ECO:0000269" key="3">
    <source>
    </source>
</evidence>
<evidence type="ECO:0000269" key="4">
    <source>
    </source>
</evidence>
<evidence type="ECO:0000269" key="5">
    <source>
    </source>
</evidence>
<evidence type="ECO:0000269" key="6">
    <source>
    </source>
</evidence>
<evidence type="ECO:0000269" key="7">
    <source>
    </source>
</evidence>
<evidence type="ECO:0000305" key="8"/>
<evidence type="ECO:0000305" key="9">
    <source>
    </source>
</evidence>
<evidence type="ECO:0000305" key="10">
    <source>
    </source>
</evidence>
<evidence type="ECO:0000305" key="11">
    <source>
    </source>
</evidence>
<accession>P9WI47</accession>
<accession>L0T342</accession>
<accession>Q79FZ4</accession>
<accession>Q7DA58</accession>
<proteinExistence type="evidence at protein level"/>
<keyword id="KW-1035">Host cytoplasm</keyword>
<keyword id="KW-1048">Host nucleus</keyword>
<keyword id="KW-1185">Reference proteome</keyword>
<keyword id="KW-0964">Secreted</keyword>
<keyword id="KW-0843">Virulence</keyword>
<comment type="function">
    <text evidence="3 6 7">Inhibits nitric oxide (NO) production in activated macrophages (PubMed:23448669, PubMed:28071726). Acts by inhibiting expression of the host inducible nitric oxide synthase (iNOS) (PubMed:28071726). PPE2 is translocated into the host macrophage nucleus, where it interacts with a GATA-binding site overlapping with the TATA box of NOS2 (iNOS) promoter, and strongly inhibits NOS2 gene transcription (PubMed:28071726). Reduction in NO production in turn facilitates intracellular survival of the bacilli inside the macrophage (PubMed:28071726). In addition, disrupts the assembly of NADPH oxidase complex, which inhibits NADPH oxidase-mediated reactive oxygen species (ROS) generation in macrophages and favors M.tuberculosis survival (PubMed:31375544). Acts by interacting with NCF2, the cytosolic subunit of NADPH oxidase, and preventing translocation of NCF2 and NCF1 to the membrane, which causes a reduction of the functional assembly of NADPH oxidase complex and a decrease in NADPH oxidase activity (PubMed:31375544).</text>
</comment>
<comment type="subcellular location">
    <subcellularLocation>
        <location evidence="3">Secreted</location>
    </subcellularLocation>
    <subcellularLocation>
        <location evidence="6 9">Host cytoplasm</location>
    </subcellularLocation>
    <subcellularLocation>
        <location evidence="6">Host nucleus</location>
    </subcellularLocation>
    <text evidence="6">Translocated into the macrophage nucleus via the classical importin alpha/beta pathway.</text>
</comment>
<comment type="domain">
    <text evidence="6 7">Contains a conserved PPE N-terminal domain and a variable C-terminal domain (PubMed:31375544). The C-terminal region includes a SH3-like region, a leucine zipper DNA-binding motif and a functional nuclear localization signal (NLS) (PubMed:28071726, PubMed:31375544).</text>
</comment>
<comment type="miscellaneous">
    <text evidence="4 5">Shows a strong immunoreactivity toward tuberculosis patient sera compared to that of BCG-vaccinated controls. Could be an attractive candidate for serodiagnosis to discriminate patients with active tuberculosis from BCG-vaccinated individuals (PubMed:23827809, PubMed:26364913). Could diagnose both pulmonary and extrapulmonary tuberculosis cases (PubMed:23827809). However, it has lower sensitivity to detect smear negative and extrapulmonary cases as compared to PPE17/Rv1168c (PubMed:26364913).</text>
</comment>
<comment type="miscellaneous">
    <text evidence="2">Was identified as a high-confidence drug target.</text>
</comment>
<comment type="similarity">
    <text evidence="8">Belongs to the mycobacterial PPE family.</text>
</comment>
<name>PPE02_MYCTU</name>
<gene>
    <name type="primary">PPE2</name>
    <name type="ordered locus">Rv0256c</name>
</gene>
<organism>
    <name type="scientific">Mycobacterium tuberculosis (strain ATCC 25618 / H37Rv)</name>
    <dbReference type="NCBI Taxonomy" id="83332"/>
    <lineage>
        <taxon>Bacteria</taxon>
        <taxon>Bacillati</taxon>
        <taxon>Actinomycetota</taxon>
        <taxon>Actinomycetes</taxon>
        <taxon>Mycobacteriales</taxon>
        <taxon>Mycobacteriaceae</taxon>
        <taxon>Mycobacterium</taxon>
        <taxon>Mycobacterium tuberculosis complex</taxon>
    </lineage>
</organism>
<sequence length="556" mass="56952">MTAPIWMASPPEVHSALLSSGPGPGPLLVSAEGWHSLSIAYAETADELAALLAAVQAGTWDGPTAAVYVAAHTPYLAWLVQASANSAAMATRQETAATAYGTALAAMPTLAELGANHALHGVLMATNFFGINTIPIALNESDYARMWIQAATTMASYQAVSTAAVAAAPQTTPAPQIVKANAPTAASDEPNQVQEWLQWLQKIGYTDFYNNVIQPFINWLTNLPFLQAMFSGFDPWLPSLGNPLTFLSPANIAFALGYPMDIGSYVAFLSQTFAFIGADLAAAFASGNPATIAFTLMFTTVEAIGTIITDTIALVKTLLEQTLALLPAALPLLAAPLAPLTLAPASAAGGFAGLSGLAGLVGIPPSAPPVIPPVAAIAPSIPTPTPTPAPAPAPTAVTAPTPPPGPPPPPVTAPPPVTGAGIQSFGYLVGDLNSAAQARKAVGTGVRKKTPEPDSAEAPAAAAAPEEQVQPQRRRRPKIKQLGRGYEYLDLDPETGHDPTGSPQGAGTLGFAGTTHKASPGQVAGLITLPNDAFGGSPRTPMMPGTWDTDSATRVE</sequence>
<reference key="1">
    <citation type="journal article" date="1998" name="Nature">
        <title>Deciphering the biology of Mycobacterium tuberculosis from the complete genome sequence.</title>
        <authorList>
            <person name="Cole S.T."/>
            <person name="Brosch R."/>
            <person name="Parkhill J."/>
            <person name="Garnier T."/>
            <person name="Churcher C.M."/>
            <person name="Harris D.E."/>
            <person name="Gordon S.V."/>
            <person name="Eiglmeier K."/>
            <person name="Gas S."/>
            <person name="Barry C.E. III"/>
            <person name="Tekaia F."/>
            <person name="Badcock K."/>
            <person name="Basham D."/>
            <person name="Brown D."/>
            <person name="Chillingworth T."/>
            <person name="Connor R."/>
            <person name="Davies R.M."/>
            <person name="Devlin K."/>
            <person name="Feltwell T."/>
            <person name="Gentles S."/>
            <person name="Hamlin N."/>
            <person name="Holroyd S."/>
            <person name="Hornsby T."/>
            <person name="Jagels K."/>
            <person name="Krogh A."/>
            <person name="McLean J."/>
            <person name="Moule S."/>
            <person name="Murphy L.D."/>
            <person name="Oliver S."/>
            <person name="Osborne J."/>
            <person name="Quail M.A."/>
            <person name="Rajandream M.A."/>
            <person name="Rogers J."/>
            <person name="Rutter S."/>
            <person name="Seeger K."/>
            <person name="Skelton S."/>
            <person name="Squares S."/>
            <person name="Squares R."/>
            <person name="Sulston J.E."/>
            <person name="Taylor K."/>
            <person name="Whitehead S."/>
            <person name="Barrell B.G."/>
        </authorList>
    </citation>
    <scope>NUCLEOTIDE SEQUENCE [LARGE SCALE GENOMIC DNA]</scope>
    <source>
        <strain>ATCC 25618 / H37Rv</strain>
    </source>
</reference>
<reference key="2">
    <citation type="journal article" date="2008" name="BMC Syst. Biol.">
        <title>targetTB: a target identification pipeline for Mycobacterium tuberculosis through an interactome, reactome and genome-scale structural analysis.</title>
        <authorList>
            <person name="Raman K."/>
            <person name="Yeturu K."/>
            <person name="Chandra N."/>
        </authorList>
    </citation>
    <scope>IDENTIFICATION AS A DRUG TARGET [LARGE SCALE ANALYSIS]</scope>
</reference>
<reference key="3">
    <citation type="journal article" date="2011" name="Mol. Cell. Proteomics">
        <title>Proteogenomic analysis of Mycobacterium tuberculosis by high resolution mass spectrometry.</title>
        <authorList>
            <person name="Kelkar D.S."/>
            <person name="Kumar D."/>
            <person name="Kumar P."/>
            <person name="Balakrishnan L."/>
            <person name="Muthusamy B."/>
            <person name="Yadav A.K."/>
            <person name="Shrivastava P."/>
            <person name="Marimuthu A."/>
            <person name="Anand S."/>
            <person name="Sundaram H."/>
            <person name="Kingsbury R."/>
            <person name="Harsha H.C."/>
            <person name="Nair B."/>
            <person name="Prasad T.S."/>
            <person name="Chauhan D.S."/>
            <person name="Katoch K."/>
            <person name="Katoch V.M."/>
            <person name="Kumar P."/>
            <person name="Chaerkady R."/>
            <person name="Ramachandran S."/>
            <person name="Dash D."/>
            <person name="Pandey A."/>
        </authorList>
    </citation>
    <scope>IDENTIFICATION BY MASS SPECTROMETRY [LARGE SCALE ANALYSIS]</scope>
    <source>
        <strain>ATCC 25618 / H37Rv</strain>
    </source>
</reference>
<reference key="4">
    <citation type="journal article" date="2013" name="Ann. N. Y. Acad. Sci.">
        <title>PPE2 protein of Mycobacterium tuberculosis may inhibit nitric oxide in activated macrophages.</title>
        <authorList>
            <person name="Bhat K.H."/>
            <person name="Das A."/>
            <person name="Srikantam A."/>
            <person name="Mukhopadhyay S."/>
        </authorList>
    </citation>
    <scope>PRELIMINARY FUNCTION</scope>
    <scope>SUBCELLULAR LOCATION</scope>
</reference>
<reference key="5">
    <citation type="journal article" date="2014" name="Infect. Genet. Evol.">
        <title>Mycobacterium tuberculosis PPE protein Rv0256c induces strong B cell response in tuberculosis patients.</title>
        <authorList>
            <person name="Abraham P.R."/>
            <person name="Latha G.S."/>
            <person name="Valluri V.L."/>
            <person name="Mukhopadhyay S."/>
        </authorList>
    </citation>
    <scope>FUNCTION AS A CANDIDATE FOR SERODIAGNOSIS</scope>
</reference>
<reference key="6">
    <citation type="journal article" date="2016" name="Infect. Genet. Evol.">
        <title>The Mycobacterium tuberculosis PPE protein Rv1168c induces stronger B cell response than Rv0256c in active TB patients.</title>
        <authorList>
            <person name="Abraham P.R."/>
            <person name="Udgata A."/>
            <person name="Latha G.S."/>
            <person name="Mukhopadhyay S."/>
        </authorList>
    </citation>
    <scope>FUNCTION AS A CANDIDATE FOR SERODIAGNOSIS</scope>
</reference>
<reference key="7">
    <citation type="journal article" date="2017" name="Sci. Rep.">
        <title>The PPE2 protein of Mycobacterium tuberculosis translocates to host nucleus and inhibits nitric oxide production.</title>
        <authorList>
            <person name="Bhat K.H."/>
            <person name="Srivastava S."/>
            <person name="Kotturu S.K."/>
            <person name="Ghosh S."/>
            <person name="Mukhopadhyay S."/>
        </authorList>
    </citation>
    <scope>FUNCTION</scope>
    <scope>SUBCELLULAR LOCATION</scope>
    <scope>DOMAIN</scope>
</reference>
<reference key="8">
    <citation type="journal article" date="2017" name="Future Microbiol.">
        <title>Mycobacterium tuberculosis: what is the role of PPE2 during infection?</title>
        <authorList>
            <person name="Mukhopadhyay S."/>
            <person name="Ghosh S."/>
        </authorList>
    </citation>
    <scope>REVIEW</scope>
</reference>
<reference key="9">
    <citation type="journal article" date="2019" name="J. Immunol.">
        <title>Mycobacterium tuberculosis PPE2 protein interacts with p67phox and inhibits reactive oxygen species production.</title>
        <authorList>
            <person name="Srivastava S."/>
            <person name="Battu M.B."/>
            <person name="Khan M.Z."/>
            <person name="Nandicoori V.K."/>
            <person name="Mukhopadhyay S."/>
        </authorList>
    </citation>
    <scope>FUNCTION</scope>
    <scope>DOMAIN</scope>
    <scope>MUTAGENESIS OF TYR-209; TRP-236 AND PRO-249</scope>
</reference>
<protein>
    <recommendedName>
        <fullName evidence="8">PPE family protein PPE2</fullName>
    </recommendedName>
</protein>
<dbReference type="EMBL" id="AL123456">
    <property type="protein sequence ID" value="CCP42985.1"/>
    <property type="molecule type" value="Genomic_DNA"/>
</dbReference>
<dbReference type="PIR" id="D70940">
    <property type="entry name" value="D70940"/>
</dbReference>
<dbReference type="RefSeq" id="WP_003401347.1">
    <property type="nucleotide sequence ID" value="NZ_KK339370.1"/>
</dbReference>
<dbReference type="RefSeq" id="YP_177704.1">
    <property type="nucleotide sequence ID" value="NC_000962.3"/>
</dbReference>
<dbReference type="SMR" id="P9WI47"/>
<dbReference type="STRING" id="83332.Rv0256c"/>
<dbReference type="PaxDb" id="83332-Rv0256c"/>
<dbReference type="DNASU" id="886684"/>
<dbReference type="GeneID" id="886684"/>
<dbReference type="KEGG" id="mtu:Rv0256c"/>
<dbReference type="KEGG" id="mtv:RVBD_0256c"/>
<dbReference type="PATRIC" id="fig|83332.111.peg.289"/>
<dbReference type="TubercuList" id="Rv0256c"/>
<dbReference type="eggNOG" id="COG5651">
    <property type="taxonomic scope" value="Bacteria"/>
</dbReference>
<dbReference type="InParanoid" id="P9WI47"/>
<dbReference type="OrthoDB" id="4753487at2"/>
<dbReference type="Reactome" id="R-HSA-9636249">
    <property type="pathway name" value="Inhibition of nitric oxide production"/>
</dbReference>
<dbReference type="Proteomes" id="UP000001584">
    <property type="component" value="Chromosome"/>
</dbReference>
<dbReference type="GO" id="GO:0005829">
    <property type="term" value="C:cytosol"/>
    <property type="evidence" value="ECO:0000304"/>
    <property type="project" value="Reactome"/>
</dbReference>
<dbReference type="GO" id="GO:0005576">
    <property type="term" value="C:extracellular region"/>
    <property type="evidence" value="ECO:0007669"/>
    <property type="project" value="UniProtKB-SubCell"/>
</dbReference>
<dbReference type="GO" id="GO:0030430">
    <property type="term" value="C:host cell cytoplasm"/>
    <property type="evidence" value="ECO:0007669"/>
    <property type="project" value="UniProtKB-SubCell"/>
</dbReference>
<dbReference type="GO" id="GO:0042025">
    <property type="term" value="C:host cell nucleus"/>
    <property type="evidence" value="ECO:0007669"/>
    <property type="project" value="UniProtKB-SubCell"/>
</dbReference>
<dbReference type="GO" id="GO:0005886">
    <property type="term" value="C:plasma membrane"/>
    <property type="evidence" value="ECO:0007005"/>
    <property type="project" value="MTBBASE"/>
</dbReference>
<dbReference type="GO" id="GO:0052572">
    <property type="term" value="P:response to host immune response"/>
    <property type="evidence" value="ECO:0000318"/>
    <property type="project" value="GO_Central"/>
</dbReference>
<dbReference type="FunFam" id="1.20.1260.20:FF:000001">
    <property type="entry name" value="PPE family protein PPE41"/>
    <property type="match status" value="1"/>
</dbReference>
<dbReference type="Gene3D" id="1.20.1260.20">
    <property type="entry name" value="PPE superfamily"/>
    <property type="match status" value="1"/>
</dbReference>
<dbReference type="InterPro" id="IPR043641">
    <property type="entry name" value="PPE-PPW_C"/>
</dbReference>
<dbReference type="InterPro" id="IPR000030">
    <property type="entry name" value="PPE_dom"/>
</dbReference>
<dbReference type="InterPro" id="IPR038332">
    <property type="entry name" value="PPE_sf"/>
</dbReference>
<dbReference type="PANTHER" id="PTHR46766">
    <property type="entry name" value="GLUTAMINE-RICH PROTEIN 2"/>
    <property type="match status" value="1"/>
</dbReference>
<dbReference type="PANTHER" id="PTHR46766:SF1">
    <property type="entry name" value="GLUTAMINE-RICH PROTEIN 2"/>
    <property type="match status" value="1"/>
</dbReference>
<dbReference type="Pfam" id="PF00823">
    <property type="entry name" value="PPE"/>
    <property type="match status" value="1"/>
</dbReference>
<dbReference type="Pfam" id="PF18878">
    <property type="entry name" value="PPE-PPW"/>
    <property type="match status" value="1"/>
</dbReference>
<dbReference type="SUPFAM" id="SSF140459">
    <property type="entry name" value="PE/PPE dimer-like"/>
    <property type="match status" value="1"/>
</dbReference>